<keyword id="KW-0025">Alternative splicing</keyword>
<keyword id="KW-0966">Cell projection</keyword>
<keyword id="KW-0969">Cilium</keyword>
<keyword id="KW-0970">Cilium biogenesis/degradation</keyword>
<keyword id="KW-0963">Cytoplasm</keyword>
<keyword id="KW-0206">Cytoskeleton</keyword>
<keyword id="KW-0282">Flagellum</keyword>
<keyword id="KW-0333">Golgi apparatus</keyword>
<keyword id="KW-0344">Guanine-nucleotide releasing factor</keyword>
<keyword id="KW-0449">Lipoprotein</keyword>
<keyword id="KW-0488">Methylation</keyword>
<keyword id="KW-0597">Phosphoprotein</keyword>
<keyword id="KW-0636">Prenylation</keyword>
<keyword id="KW-1185">Reference proteome</keyword>
<keyword id="KW-0677">Repeat</keyword>
<keyword id="KW-0716">Sensory transduction</keyword>
<keyword id="KW-0844">Vision</keyword>
<organism>
    <name type="scientific">Mus musculus</name>
    <name type="common">Mouse</name>
    <dbReference type="NCBI Taxonomy" id="10090"/>
    <lineage>
        <taxon>Eukaryota</taxon>
        <taxon>Metazoa</taxon>
        <taxon>Chordata</taxon>
        <taxon>Craniata</taxon>
        <taxon>Vertebrata</taxon>
        <taxon>Euteleostomi</taxon>
        <taxon>Mammalia</taxon>
        <taxon>Eutheria</taxon>
        <taxon>Euarchontoglires</taxon>
        <taxon>Glires</taxon>
        <taxon>Rodentia</taxon>
        <taxon>Myomorpha</taxon>
        <taxon>Muroidea</taxon>
        <taxon>Muridae</taxon>
        <taxon>Murinae</taxon>
        <taxon>Mus</taxon>
        <taxon>Mus</taxon>
    </lineage>
</organism>
<accession>Q9R0X5</accession>
<accession>A2ADP3</accession>
<accession>G9BBQ2</accession>
<accession>O88408</accession>
<accession>Q9CU92</accession>
<proteinExistence type="evidence at protein level"/>
<evidence type="ECO:0000250" key="1">
    <source>
        <dbReference type="UniProtKB" id="Q92834"/>
    </source>
</evidence>
<evidence type="ECO:0000250" key="2">
    <source>
        <dbReference type="UniProtKB" id="Q9N1T2"/>
    </source>
</evidence>
<evidence type="ECO:0000255" key="3"/>
<evidence type="ECO:0000256" key="4">
    <source>
        <dbReference type="SAM" id="MobiDB-lite"/>
    </source>
</evidence>
<evidence type="ECO:0000269" key="5">
    <source>
    </source>
</evidence>
<evidence type="ECO:0000269" key="6">
    <source>
    </source>
</evidence>
<evidence type="ECO:0000269" key="7">
    <source>
    </source>
</evidence>
<evidence type="ECO:0000269" key="8">
    <source>
    </source>
</evidence>
<evidence type="ECO:0000269" key="9">
    <source>
    </source>
</evidence>
<evidence type="ECO:0000269" key="10">
    <source>
    </source>
</evidence>
<evidence type="ECO:0000269" key="11">
    <source>
    </source>
</evidence>
<evidence type="ECO:0000269" key="12">
    <source>
    </source>
</evidence>
<evidence type="ECO:0000269" key="13">
    <source>
    </source>
</evidence>
<evidence type="ECO:0000269" key="14">
    <source>
    </source>
</evidence>
<evidence type="ECO:0000269" key="15">
    <source>
    </source>
</evidence>
<evidence type="ECO:0000269" key="16">
    <source>
    </source>
</evidence>
<evidence type="ECO:0000269" key="17">
    <source>
    </source>
</evidence>
<evidence type="ECO:0000269" key="18">
    <source>
    </source>
</evidence>
<evidence type="ECO:0000269" key="19">
    <source>
    </source>
</evidence>
<evidence type="ECO:0000303" key="20">
    <source>
    </source>
</evidence>
<evidence type="ECO:0000305" key="21"/>
<evidence type="ECO:0000305" key="22">
    <source>
    </source>
</evidence>
<evidence type="ECO:0000305" key="23">
    <source>
    </source>
</evidence>
<evidence type="ECO:0000305" key="24">
    <source>
    </source>
</evidence>
<evidence type="ECO:0000305" key="25">
    <source>
    </source>
</evidence>
<evidence type="ECO:0000312" key="26">
    <source>
        <dbReference type="MGI" id="MGI:1344037"/>
    </source>
</evidence>
<comment type="function">
    <text evidence="1 15 17">Acts as a guanine-nucleotide releasing factor (GEF) for RAB8A and RAB37 by promoting the conversion of inactive RAB-GDP to the active form RAB-GTP (PubMed:38536817). GEF activity towards RAB8A may facilitate ciliary trafficking by modulating ciliary intracellular localization of RAB8A (By similarity). GEF activity towards RAB37 maintains autophagic homeostasis and retinal function (PubMed:38536817). Involved in photoreceptor integrity (PubMed:22563472, PubMed:38536817). May control cilia formation by regulating actin stress filaments and cell contractility. May be involved in microtubule organization and regulation of transport in primary cilia (By similarity).</text>
</comment>
<comment type="function">
    <molecule>Isoform 5</molecule>
    <text evidence="10">Isoform 5 may play a critical role in spermatogenesis and in intraflagellar transport processes.</text>
</comment>
<comment type="subunit">
    <text evidence="1 8 9 14 16 17 19">Interacts with SPATA7 (PubMed:29899041). Interacts with PDE6D (PubMed:9990021). Interacts with RPGRIP1 and RPGRIP1L; PDE6D, RPGRIP1 and RPGRIP1L may compete for the same binding sites (By similarity). Interacts with NPM1 (By similarity). Interacts with PDE6D. Isoform 5 interacts (via N-terminus) with SMC1A and SMC3 (PubMed:16043481). Isoform 5 interacts with CEP290 (PubMed:16632484). Interacts with WHRN (PubMed:22323458). Interacts with RAB37 and RAB8A (in GDP-bound forms); functions as GEF for RAB37 and RAB8A (PubMed:38536817).</text>
</comment>
<comment type="interaction">
    <interactant intactId="EBI-6915619">
        <id>Q9R0X5</id>
    </interactant>
    <interactant intactId="EBI-5235485">
        <id>Q68CZ1</id>
        <label>RPGRIP1L</label>
    </interactant>
    <organismsDiffer>true</organismsDiffer>
    <experiments>3</experiments>
</comment>
<comment type="interaction">
    <interactant intactId="EBI-6915646">
        <id>Q9R0X5-5</id>
    </interactant>
    <interactant intactId="EBI-6915655">
        <id>Q80VW5-12</id>
        <label>Whrn</label>
    </interactant>
    <organismsDiffer>false</organismsDiffer>
    <experiments>2</experiments>
</comment>
<comment type="subcellular location">
    <subcellularLocation>
        <location evidence="7 8 11 18">Golgi apparatus</location>
    </subcellularLocation>
    <subcellularLocation>
        <location evidence="1">Cytoplasm</location>
        <location evidence="1">Cytoskeleton</location>
        <location evidence="1">Microtubule organizing center</location>
        <location evidence="1">Centrosome</location>
    </subcellularLocation>
    <subcellularLocation>
        <location evidence="16 17">Cell projection</location>
        <location evidence="16 17">Cilium</location>
    </subcellularLocation>
    <text evidence="2 7 9 14 16 17">In the retinal photoreceptor cell layer, localizes at the connecting cilium (PubMed:29899041, PubMed:38536817). Colocalizes with WHRN in the photoreceptor connecting cilium (PubMed:22323458). Colocalizes with CEP290 in the photoreceptor connecting cilium (PubMed:16632484). Colocalizes with RPGRIP1 in the photoreceptor connecting cilium (PubMed:15772089). Colocalizes with RPGR at the primary cilia of epithelial cells (By similarity).</text>
</comment>
<comment type="subcellular location">
    <molecule>Isoform 5</molecule>
    <subcellularLocation>
        <location>Cytoplasm</location>
        <location>Cytoskeleton</location>
        <location>Cilium basal body</location>
    </subcellularLocation>
    <subcellularLocation>
        <location>Cytoplasm</location>
        <location>Cytoskeleton</location>
        <location>Cilium axoneme</location>
    </subcellularLocation>
    <subcellularLocation>
        <location evidence="11">Cytoplasm</location>
        <location evidence="11">Cytoskeleton</location>
        <location evidence="11">Flagellum axoneme</location>
    </subcellularLocation>
</comment>
<comment type="alternative products">
    <event type="alternative splicing"/>
    <isoform>
        <id>Q9R0X5-1</id>
        <name>1</name>
        <name>ex1-19</name>
        <sequence type="displayed"/>
    </isoform>
    <isoform>
        <id>Q9R0X5-2</id>
        <name>2</name>
        <sequence type="described" ref="VSP_005552"/>
    </isoform>
    <isoform>
        <id>Q9R0X5-3</id>
        <name>3</name>
        <sequence type="described" ref="VSP_005552 VSP_005553"/>
    </isoform>
    <isoform>
        <id>Q9R0X5-4</id>
        <name>4</name>
        <sequence type="described" ref="VSP_005551 VSP_005552 VSP_005554 VSP_005555"/>
    </isoform>
    <isoform>
        <id>Q9R0X5-5</id>
        <name>5</name>
        <name>ORF15</name>
        <sequence type="described" ref="VSP_045292"/>
    </isoform>
    <text>Additional isoforms seem to exist.</text>
</comment>
<comment type="tissue specificity">
    <text evidence="5 6 9 10 11 12 13 14 16 17 18">Expressed in the retina (at protein level) (PubMed:10401007, PubMed:12140192, PubMed:16632484, PubMed:20007830, PubMed:21546531, PubMed:22323458, PubMed:29899041, PubMed:38536817). Located mainly in the connecting cilia between the outer segment and inner segment and also observed in the outer plexiform layer, inner plexiform layer, and ganglion cell layer of the retinas (PubMed:38536817). Isoform 1: Expressed in the retina (at protein level) (PubMed:21546531). Isoform 5: Expressed in the retina (at protein level) (PubMed:20007830, PubMed:21546531). Expressed in the brain (PubMed:10401007, PubMed:9677393). Expressed in the testis (at protein level) (PubMed:10401007, PubMed:18579752). Expressed in kidney (at protein level) (PubMed:10401007, PubMed:20805823).</text>
</comment>
<comment type="developmental stage">
    <text evidence="13 18">At postnatal day 3 isoform 1 is expressed in the retina in a narrow band at the developing photoreceptor layer; expression in this band persists through to postnatal day 14 but becomes severely diminished in the adult retina. Isoform 5 is first detected in the retina at postnatal day 14 and is expressed at increased levels in the adult retina (at protein level). Expressed throughout embryonic development from day 7 of gestation. Also expressed in adult.</text>
</comment>
<comment type="domain">
    <text evidence="1 17">The RCC1 repeat region mediates interactions with RPGRIP1 and RAB37.</text>
</comment>
<comment type="PTM">
    <text evidence="18">Prenylated.</text>
</comment>
<comment type="disruption phenotype">
    <text evidence="17">Knockout mice show photoreceptor degeneration owing to autophagy impairment in the retina.</text>
</comment>
<comment type="miscellaneous">
    <text evidence="22">Male transgenic mice carrying multiple copies of the Rpgr transgene are infertile showing normal mating but no progeny; these mice also exhibit reduced sperm numbers as well as morphological and functional defects in the sperm flagellum.</text>
</comment>
<comment type="miscellaneous">
    <text evidence="23">Male BL/6 and BALB/c transgenic mice with an in-frame deletion of exon 4 of Rpgr show retinal degeneration that is rod or cone dominated, respectively.</text>
</comment>
<comment type="miscellaneous">
    <text evidence="24">Overexpression of isoform 1 results in atypical accumulation of Rpgr in photoreceptor outer segments, abnormal photoreceptor morphology and severe retinal degeneration.</text>
</comment>
<comment type="miscellaneous">
    <text evidence="25">In a mouse model of X-linked retinosa pigmentosa, where a 32bp duplication leads to a frameshift in the reading frame and a premature stop codon in isoform 5 (ORF15), mice exhibited retinal pathology including pigment loss and a slow progressive decrease in outer nuclear layer thickness.</text>
</comment>
<comment type="sequence caution" evidence="21">
    <conflict type="erroneous initiation">
        <sequence resource="EMBL-CDS" id="AAC40190"/>
    </conflict>
    <text>Extended N-terminus.</text>
</comment>
<comment type="sequence caution" evidence="21">
    <conflict type="erroneous initiation">
        <sequence resource="EMBL-CDS" id="BAB30628"/>
    </conflict>
    <text>Extended N-terminus.</text>
</comment>
<comment type="sequence caution" evidence="21">
    <conflict type="erroneous initiation">
        <sequence resource="EMBL-CDS" id="CAM22657"/>
    </conflict>
    <text>Extended N-terminus.</text>
</comment>
<name>RPGR_MOUSE</name>
<protein>
    <recommendedName>
        <fullName>X-linked retinitis pigmentosa GTPase regulator</fullName>
        <shortName>mRpgr</shortName>
    </recommendedName>
</protein>
<reference key="1">
    <citation type="journal article" date="1998" name="J. Biol. Chem.">
        <title>Biochemical characterization and subcellular localization of the mouse retinitis pigmentosa GTPase regulator.</title>
        <authorList>
            <person name="Yan D."/>
            <person name="Swain P.K."/>
            <person name="Breuer D."/>
            <person name="Tucker R.M."/>
            <person name="Wu W."/>
            <person name="Fujita R."/>
            <person name="Rehemtulla A."/>
            <person name="Burke D."/>
            <person name="Swaroop A."/>
        </authorList>
    </citation>
    <scope>NUCLEOTIDE SEQUENCE [MRNA] (ISOFORMS 2; 3 AND 4)</scope>
    <scope>SUBCELLULAR LOCATION</scope>
    <scope>TISSUE SPECIFICITY</scope>
    <scope>DEVELOPMENTAL STAGE</scope>
    <scope>ISOPRENYLATION AT CYS-998</scope>
    <source>
        <tissue>Brain</tissue>
    </source>
</reference>
<reference key="2">
    <citation type="journal article" date="1999" name="Hum. Mol. Genet.">
        <title>RPGR transcription studies in mouse and human tissues reveal a retina-specific isoform that is disrupted in a patient with X-linked retinitis pigmentosa.</title>
        <authorList>
            <person name="Kirschner R."/>
            <person name="Rosenberg T."/>
            <person name="Schultz-Heienbrok R."/>
            <person name="Lenzner S."/>
            <person name="Feil S."/>
            <person name="Roepman R."/>
            <person name="Cremers F.P.M."/>
            <person name="Ropers H.-H."/>
            <person name="Berger W."/>
        </authorList>
    </citation>
    <scope>NUCLEOTIDE SEQUENCE [MRNA] (ISOFORM 1)</scope>
    <scope>TISSUE SPECIFICITY</scope>
    <source>
        <tissue>Testis</tissue>
    </source>
</reference>
<reference key="3">
    <citation type="journal article" date="2001" name="Hum. Genet.">
        <title>DNA sequence comparison of human and mouse retinitis pigmentosa GTPase regulator (RPGR) identifies tissue-specific exons and putative regulatory elements.</title>
        <authorList>
            <person name="Kirschner R."/>
            <person name="Erturk D."/>
            <person name="Zeitz C."/>
            <person name="Sahin S."/>
            <person name="Ramser J."/>
            <person name="Cremers F.P.M."/>
            <person name="Ropers H.-H."/>
            <person name="Berger W."/>
        </authorList>
    </citation>
    <scope>NUCLEOTIDE SEQUENCE [GENOMIC DNA]</scope>
    <scope>ALTERNATIVE SPLICING (ISOFORM 1)</scope>
    <source>
        <strain>129/SvEvTacfBr</strain>
    </source>
</reference>
<reference key="4">
    <citation type="journal article" date="2009" name="PLoS Biol.">
        <title>Lineage-specific biology revealed by a finished genome assembly of the mouse.</title>
        <authorList>
            <person name="Church D.M."/>
            <person name="Goodstadt L."/>
            <person name="Hillier L.W."/>
            <person name="Zody M.C."/>
            <person name="Goldstein S."/>
            <person name="She X."/>
            <person name="Bult C.J."/>
            <person name="Agarwala R."/>
            <person name="Cherry J.L."/>
            <person name="DiCuccio M."/>
            <person name="Hlavina W."/>
            <person name="Kapustin Y."/>
            <person name="Meric P."/>
            <person name="Maglott D."/>
            <person name="Birtle Z."/>
            <person name="Marques A.C."/>
            <person name="Graves T."/>
            <person name="Zhou S."/>
            <person name="Teague B."/>
            <person name="Potamousis K."/>
            <person name="Churas C."/>
            <person name="Place M."/>
            <person name="Herschleb J."/>
            <person name="Runnheim R."/>
            <person name="Forrest D."/>
            <person name="Amos-Landgraf J."/>
            <person name="Schwartz D.C."/>
            <person name="Cheng Z."/>
            <person name="Lindblad-Toh K."/>
            <person name="Eichler E.E."/>
            <person name="Ponting C.P."/>
        </authorList>
    </citation>
    <scope>NUCLEOTIDE SEQUENCE [LARGE SCALE GENOMIC DNA]</scope>
    <source>
        <strain>C57BL/6J</strain>
    </source>
</reference>
<reference key="5">
    <citation type="journal article" date="2005" name="Science">
        <title>The transcriptional landscape of the mammalian genome.</title>
        <authorList>
            <person name="Carninci P."/>
            <person name="Kasukawa T."/>
            <person name="Katayama S."/>
            <person name="Gough J."/>
            <person name="Frith M.C."/>
            <person name="Maeda N."/>
            <person name="Oyama R."/>
            <person name="Ravasi T."/>
            <person name="Lenhard B."/>
            <person name="Wells C."/>
            <person name="Kodzius R."/>
            <person name="Shimokawa K."/>
            <person name="Bajic V.B."/>
            <person name="Brenner S.E."/>
            <person name="Batalov S."/>
            <person name="Forrest A.R."/>
            <person name="Zavolan M."/>
            <person name="Davis M.J."/>
            <person name="Wilming L.G."/>
            <person name="Aidinis V."/>
            <person name="Allen J.E."/>
            <person name="Ambesi-Impiombato A."/>
            <person name="Apweiler R."/>
            <person name="Aturaliya R.N."/>
            <person name="Bailey T.L."/>
            <person name="Bansal M."/>
            <person name="Baxter L."/>
            <person name="Beisel K.W."/>
            <person name="Bersano T."/>
            <person name="Bono H."/>
            <person name="Chalk A.M."/>
            <person name="Chiu K.P."/>
            <person name="Choudhary V."/>
            <person name="Christoffels A."/>
            <person name="Clutterbuck D.R."/>
            <person name="Crowe M.L."/>
            <person name="Dalla E."/>
            <person name="Dalrymple B.P."/>
            <person name="de Bono B."/>
            <person name="Della Gatta G."/>
            <person name="di Bernardo D."/>
            <person name="Down T."/>
            <person name="Engstrom P."/>
            <person name="Fagiolini M."/>
            <person name="Faulkner G."/>
            <person name="Fletcher C.F."/>
            <person name="Fukushima T."/>
            <person name="Furuno M."/>
            <person name="Futaki S."/>
            <person name="Gariboldi M."/>
            <person name="Georgii-Hemming P."/>
            <person name="Gingeras T.R."/>
            <person name="Gojobori T."/>
            <person name="Green R.E."/>
            <person name="Gustincich S."/>
            <person name="Harbers M."/>
            <person name="Hayashi Y."/>
            <person name="Hensch T.K."/>
            <person name="Hirokawa N."/>
            <person name="Hill D."/>
            <person name="Huminiecki L."/>
            <person name="Iacono M."/>
            <person name="Ikeo K."/>
            <person name="Iwama A."/>
            <person name="Ishikawa T."/>
            <person name="Jakt M."/>
            <person name="Kanapin A."/>
            <person name="Katoh M."/>
            <person name="Kawasawa Y."/>
            <person name="Kelso J."/>
            <person name="Kitamura H."/>
            <person name="Kitano H."/>
            <person name="Kollias G."/>
            <person name="Krishnan S.P."/>
            <person name="Kruger A."/>
            <person name="Kummerfeld S.K."/>
            <person name="Kurochkin I.V."/>
            <person name="Lareau L.F."/>
            <person name="Lazarevic D."/>
            <person name="Lipovich L."/>
            <person name="Liu J."/>
            <person name="Liuni S."/>
            <person name="McWilliam S."/>
            <person name="Madan Babu M."/>
            <person name="Madera M."/>
            <person name="Marchionni L."/>
            <person name="Matsuda H."/>
            <person name="Matsuzawa S."/>
            <person name="Miki H."/>
            <person name="Mignone F."/>
            <person name="Miyake S."/>
            <person name="Morris K."/>
            <person name="Mottagui-Tabar S."/>
            <person name="Mulder N."/>
            <person name="Nakano N."/>
            <person name="Nakauchi H."/>
            <person name="Ng P."/>
            <person name="Nilsson R."/>
            <person name="Nishiguchi S."/>
            <person name="Nishikawa S."/>
            <person name="Nori F."/>
            <person name="Ohara O."/>
            <person name="Okazaki Y."/>
            <person name="Orlando V."/>
            <person name="Pang K.C."/>
            <person name="Pavan W.J."/>
            <person name="Pavesi G."/>
            <person name="Pesole G."/>
            <person name="Petrovsky N."/>
            <person name="Piazza S."/>
            <person name="Reed J."/>
            <person name="Reid J.F."/>
            <person name="Ring B.Z."/>
            <person name="Ringwald M."/>
            <person name="Rost B."/>
            <person name="Ruan Y."/>
            <person name="Salzberg S.L."/>
            <person name="Sandelin A."/>
            <person name="Schneider C."/>
            <person name="Schoenbach C."/>
            <person name="Sekiguchi K."/>
            <person name="Semple C.A."/>
            <person name="Seno S."/>
            <person name="Sessa L."/>
            <person name="Sheng Y."/>
            <person name="Shibata Y."/>
            <person name="Shimada H."/>
            <person name="Shimada K."/>
            <person name="Silva D."/>
            <person name="Sinclair B."/>
            <person name="Sperling S."/>
            <person name="Stupka E."/>
            <person name="Sugiura K."/>
            <person name="Sultana R."/>
            <person name="Takenaka Y."/>
            <person name="Taki K."/>
            <person name="Tammoja K."/>
            <person name="Tan S.L."/>
            <person name="Tang S."/>
            <person name="Taylor M.S."/>
            <person name="Tegner J."/>
            <person name="Teichmann S.A."/>
            <person name="Ueda H.R."/>
            <person name="van Nimwegen E."/>
            <person name="Verardo R."/>
            <person name="Wei C.L."/>
            <person name="Yagi K."/>
            <person name="Yamanishi H."/>
            <person name="Zabarovsky E."/>
            <person name="Zhu S."/>
            <person name="Zimmer A."/>
            <person name="Hide W."/>
            <person name="Bult C."/>
            <person name="Grimmond S.M."/>
            <person name="Teasdale R.D."/>
            <person name="Liu E.T."/>
            <person name="Brusic V."/>
            <person name="Quackenbush J."/>
            <person name="Wahlestedt C."/>
            <person name="Mattick J.S."/>
            <person name="Hume D.A."/>
            <person name="Kai C."/>
            <person name="Sasaki D."/>
            <person name="Tomaru Y."/>
            <person name="Fukuda S."/>
            <person name="Kanamori-Katayama M."/>
            <person name="Suzuki M."/>
            <person name="Aoki J."/>
            <person name="Arakawa T."/>
            <person name="Iida J."/>
            <person name="Imamura K."/>
            <person name="Itoh M."/>
            <person name="Kato T."/>
            <person name="Kawaji H."/>
            <person name="Kawagashira N."/>
            <person name="Kawashima T."/>
            <person name="Kojima M."/>
            <person name="Kondo S."/>
            <person name="Konno H."/>
            <person name="Nakano K."/>
            <person name="Ninomiya N."/>
            <person name="Nishio T."/>
            <person name="Okada M."/>
            <person name="Plessy C."/>
            <person name="Shibata K."/>
            <person name="Shiraki T."/>
            <person name="Suzuki S."/>
            <person name="Tagami M."/>
            <person name="Waki K."/>
            <person name="Watahiki A."/>
            <person name="Okamura-Oho Y."/>
            <person name="Suzuki H."/>
            <person name="Kawai J."/>
            <person name="Hayashizaki Y."/>
        </authorList>
    </citation>
    <scope>NUCLEOTIDE SEQUENCE [LARGE SCALE MRNA] OF 1-845 (ISOFORMS 2/3)</scope>
    <source>
        <strain>C57BL/6J</strain>
        <tissue>Ovary</tissue>
        <tissue>Uterus</tissue>
    </source>
</reference>
<reference key="6">
    <citation type="journal article" date="2012" name="Invest. Ophthalmol. Vis. Sci.">
        <title>RpgrORF15 connects to the usher protein network through direct interactions with multiple whirlin isoforms.</title>
        <authorList>
            <person name="Wright R.N."/>
            <person name="Hong D.H."/>
            <person name="Perkins B."/>
        </authorList>
    </citation>
    <scope>NUCLEOTIDE SEQUENCE [GENOMIC DNA] OF 525-1001 (ISOFORM 5)</scope>
    <scope>INTERACTION WITH WHRN</scope>
    <scope>TISSUE SPECIFICITY</scope>
    <source>
        <strain>129/Sv</strain>
    </source>
</reference>
<reference key="7">
    <citation type="journal article" date="1999" name="Proc. Natl. Acad. Sci. U.S.A.">
        <title>The retinitis pigmentosa GTPase regulator, RPGR, interacts with the delta subunit of rod cyclic GMP phosphodiesterase.</title>
        <authorList>
            <person name="Linari M."/>
            <person name="Ueffing M."/>
            <person name="Manson F."/>
            <person name="Wright A."/>
            <person name="Meitinger T."/>
            <person name="Becker J."/>
        </authorList>
    </citation>
    <scope>INTERACTION WITH PDE6D</scope>
</reference>
<reference key="8">
    <citation type="journal article" date="2002" name="Hum. Mol. Genet.">
        <title>Species-specific subcellular localization of RPGR and RPGRIP isoforms: implications for the phenotypic variability of congenital retinopathies among species.</title>
        <authorList>
            <person name="Mavlyutov T.A."/>
            <person name="Zhao H."/>
            <person name="Ferreira P.A."/>
        </authorList>
    </citation>
    <scope>TISSUE SPECIFICITY</scope>
</reference>
<reference key="9">
    <citation type="journal article" date="2005" name="Hum. Mol. Genet.">
        <title>RPGR ORF15 isoform co-localizes with RPGRIP1 at centrioles and basal bodies and interacts with nucleophosmin.</title>
        <authorList>
            <person name="Shu X."/>
            <person name="Fry A.M."/>
            <person name="Tulloch B."/>
            <person name="Manson F.D."/>
            <person name="Crabb J.W."/>
            <person name="Khanna H."/>
            <person name="Faragher A.J."/>
            <person name="Lennon A."/>
            <person name="He S."/>
            <person name="Trojan P."/>
            <person name="Giessl A."/>
            <person name="Wolfrum U."/>
            <person name="Vervoort R."/>
            <person name="Swaroop A."/>
            <person name="Wright A.F."/>
        </authorList>
    </citation>
    <scope>SUBCELLULAR LOCATION</scope>
</reference>
<reference key="10">
    <citation type="journal article" date="2005" name="J. Biol. Chem.">
        <title>RPGR-ORF15, which is mutated in retinitis pigmentosa, associates with SMC1, SMC3, and microtubule transport proteins.</title>
        <authorList>
            <person name="Khanna H."/>
            <person name="Hurd T.W."/>
            <person name="Lillo C."/>
            <person name="Shu X."/>
            <person name="Parapuram S.K."/>
            <person name="He S."/>
            <person name="Akimoto M."/>
            <person name="Wright A.F."/>
            <person name="Margolis B."/>
            <person name="Williams D.S."/>
            <person name="Swaroop A."/>
        </authorList>
    </citation>
    <scope>INTERACTION WITH SMC1A AND SMC3</scope>
    <scope>SUBCELLULAR LOCATION</scope>
</reference>
<reference key="11">
    <citation type="journal article" date="2006" name="Hum. Mol. Genet.">
        <title>In-frame deletion in a novel centrosomal/ciliary protein CEP290/NPHP6 perturbs its interaction with RPGR and results in early-onset retinal degeneration in the rd16 mouse.</title>
        <authorList>
            <person name="Chang B."/>
            <person name="Khanna H."/>
            <person name="Hawes N."/>
            <person name="Jimeno D."/>
            <person name="He S."/>
            <person name="Lillo C."/>
            <person name="Parapuram S.K."/>
            <person name="Cheng H."/>
            <person name="Scott A."/>
            <person name="Hurd R.E."/>
            <person name="Sayer J.A."/>
            <person name="Otto E.A."/>
            <person name="Attanasio M."/>
            <person name="O'Toole J.F."/>
            <person name="Jin G."/>
            <person name="Shou C."/>
            <person name="Hildebrandt F."/>
            <person name="Williams D.S."/>
            <person name="Heckenlively J.R."/>
            <person name="Swaroop A."/>
        </authorList>
    </citation>
    <scope>INTERACTS WITH CEP290</scope>
    <scope>SUBCELLULAR LOCATION</scope>
    <scope>TISSUE SPECIFICITY</scope>
</reference>
<reference key="12">
    <citation type="journal article" date="2008" name="Biol. Reprod.">
        <title>Overexpression of RPGR leads to male infertility in mice due to defects in flagellar assembly.</title>
        <authorList>
            <person name="Brunner S."/>
            <person name="Colman D."/>
            <person name="Travis A.J."/>
            <person name="Luhmann U.F."/>
            <person name="Shi W."/>
            <person name="Feil S."/>
            <person name="Imsand C."/>
            <person name="Nelson J."/>
            <person name="Grimm C."/>
            <person name="Rulicke T."/>
            <person name="Fundele R."/>
            <person name="Neidhardt J."/>
            <person name="Berger W."/>
        </authorList>
    </citation>
    <scope>FUNCTION</scope>
    <scope>TISSUE SPECIFICITY</scope>
</reference>
<reference key="13">
    <citation type="journal article" date="2010" name="Cell">
        <title>A tissue-specific atlas of mouse protein phosphorylation and expression.</title>
        <authorList>
            <person name="Huttlin E.L."/>
            <person name="Jedrychowski M.P."/>
            <person name="Elias J.E."/>
            <person name="Goswami T."/>
            <person name="Rad R."/>
            <person name="Beausoleil S.A."/>
            <person name="Villen J."/>
            <person name="Haas W."/>
            <person name="Sowa M.E."/>
            <person name="Gygi S.P."/>
        </authorList>
    </citation>
    <scope>IDENTIFICATION BY MASS SPECTROMETRY [LARGE SCALE ANALYSIS]</scope>
    <source>
        <tissue>Testis</tissue>
    </source>
</reference>
<reference key="14">
    <citation type="journal article" date="2010" name="Invest. Ophthalmol. Vis. Sci.">
        <title>Cone versus rod disease in a mutant Rpgr mouse caused by different genetic backgrounds.</title>
        <authorList>
            <person name="Brunner S."/>
            <person name="Skosyrski S."/>
            <person name="Kirschner-Schwabe R."/>
            <person name="Knobeloch K.P."/>
            <person name="Neidhardt J."/>
            <person name="Feil S."/>
            <person name="Glaus E."/>
            <person name="Luhmann U.F."/>
            <person name="Ruther K."/>
            <person name="Berger W."/>
        </authorList>
    </citation>
    <scope>SUBCELLULAR LOCATION</scope>
    <scope>TISSUE SPECIFICITY</scope>
</reference>
<reference key="15">
    <citation type="journal article" date="2010" name="Kidney Int.">
        <title>Expression and localization of the ciliary disease protein retinitis pigmentosa GTPase regulator in mammalian kidney.</title>
        <authorList>
            <person name="Patil S.B."/>
            <person name="Verma R."/>
            <person name="Venkatareddy M."/>
            <person name="Khanna H."/>
        </authorList>
    </citation>
    <scope>TISSUE SPECIFICITY</scope>
</reference>
<reference key="16">
    <citation type="journal article" date="2011" name="Invest. Ophthalmol. Vis. Sci.">
        <title>Misexpression of the constitutive Rpgr(ex1-19) variant leads to severe photoreceptor degeneration.</title>
        <authorList>
            <person name="Wright R.N."/>
            <person name="Hong D.H."/>
            <person name="Perkins B."/>
        </authorList>
    </citation>
    <scope>TISSUE SPECIFICITY</scope>
    <scope>DEVELOPMENTAL STAGE</scope>
</reference>
<reference key="17">
    <citation type="journal article" date="2012" name="PLoS ONE">
        <title>Rd9 is a naturally occurring mouse model of a common form of retinitis pigmentosa caused by mutations in RPGR-ORF15.</title>
        <authorList>
            <person name="Thompson D.A."/>
            <person name="Khan N.W."/>
            <person name="Othman M.I."/>
            <person name="Chang B."/>
            <person name="Jia L."/>
            <person name="Grahek G."/>
            <person name="Wu Z."/>
            <person name="Hiriyanna S."/>
            <person name="Nellissery J."/>
            <person name="Li T."/>
            <person name="Khanna H."/>
            <person name="Colosi P."/>
            <person name="Swaroop A."/>
            <person name="Heckenlively J.R."/>
        </authorList>
    </citation>
    <scope>FUNCTION</scope>
    <scope>MOUSE MODEL OF X-LINKED RETINOSA PIGMENTOSA</scope>
</reference>
<reference key="18">
    <citation type="journal article" date="2018" name="J. Cell Biol.">
        <title>SPATA7 maintains a novel photoreceptor-specific zone in the distal connecting cilium.</title>
        <authorList>
            <person name="Dharmat R."/>
            <person name="Eblimit A."/>
            <person name="Robichaux M.A."/>
            <person name="Zhang Z."/>
            <person name="Nguyen T.T."/>
            <person name="Jung S.Y."/>
            <person name="He F."/>
            <person name="Jain A."/>
            <person name="Li Y."/>
            <person name="Qin J."/>
            <person name="Overbeek P."/>
            <person name="Roepman R."/>
            <person name="Mardon G."/>
            <person name="Wensel T.G."/>
            <person name="Chen R."/>
        </authorList>
    </citation>
    <scope>INTERACTION WITH SPATA7</scope>
    <scope>SUBCELLULAR LOCATION</scope>
    <scope>TISSUE SPECIFICITY</scope>
</reference>
<reference key="19">
    <citation type="journal article" date="2024" name="Cell Rep.">
        <title>RPGR is a guanine nucleotide exchange factor for the small GTPase RAB37 required for retinal function via autophagy regulation.</title>
        <authorList>
            <person name="Ying R."/>
            <person name="Li C."/>
            <person name="Li H."/>
            <person name="Zou J."/>
            <person name="Hu M."/>
            <person name="Hong Q."/>
            <person name="Shen Y."/>
            <person name="Hou L."/>
            <person name="Cheng H."/>
            <person name="Zhou R."/>
        </authorList>
    </citation>
    <scope>FUNCTION</scope>
    <scope>INTERACTION WITH RAB37</scope>
    <scope>DISRUPTION PHENOTYPE</scope>
    <scope>SUBCELLULAR LOCATION</scope>
    <scope>TISSUE SPECIFICITY</scope>
    <scope>DOMAIN</scope>
</reference>
<dbReference type="EMBL" id="AF044677">
    <property type="protein sequence ID" value="AAC40190.1"/>
    <property type="status" value="ALT_INIT"/>
    <property type="molecule type" value="mRNA"/>
</dbReference>
<dbReference type="EMBL" id="AJ238396">
    <property type="protein sequence ID" value="CAB54041.1"/>
    <property type="molecule type" value="mRNA"/>
</dbReference>
<dbReference type="EMBL" id="AJ318464">
    <property type="protein sequence ID" value="CAC86115.1"/>
    <property type="molecule type" value="Genomic_DNA"/>
</dbReference>
<dbReference type="EMBL" id="AL671042">
    <property type="protein sequence ID" value="CAM22657.1"/>
    <property type="status" value="ALT_INIT"/>
    <property type="molecule type" value="Genomic_DNA"/>
</dbReference>
<dbReference type="EMBL" id="AK017192">
    <property type="protein sequence ID" value="BAB30628.3"/>
    <property type="status" value="ALT_INIT"/>
    <property type="molecule type" value="mRNA"/>
</dbReference>
<dbReference type="EMBL" id="BX005236">
    <property type="status" value="NOT_ANNOTATED_CDS"/>
    <property type="molecule type" value="Genomic_DNA"/>
</dbReference>
<dbReference type="EMBL" id="HQ260316">
    <property type="protein sequence ID" value="AEO00588.1"/>
    <property type="molecule type" value="Genomic_DNA"/>
</dbReference>
<dbReference type="CCDS" id="CCDS30014.1">
    <molecule id="Q9R0X5-2"/>
</dbReference>
<dbReference type="CCDS" id="CCDS53001.1">
    <molecule id="Q9R0X5-1"/>
</dbReference>
<dbReference type="RefSeq" id="NP_001171421.2">
    <molecule id="Q9R0X5-1"/>
    <property type="nucleotide sequence ID" value="NM_001177950.2"/>
</dbReference>
<dbReference type="RefSeq" id="NP_001415130.1">
    <molecule id="Q9R0X5-3"/>
    <property type="nucleotide sequence ID" value="NM_001428201.1"/>
</dbReference>
<dbReference type="RefSeq" id="NP_001415139.1">
    <molecule id="Q9R0X5-4"/>
    <property type="nucleotide sequence ID" value="NM_001428210.1"/>
</dbReference>
<dbReference type="RefSeq" id="NP_035415.2">
    <molecule id="Q9R0X5-2"/>
    <property type="nucleotide sequence ID" value="NM_011285.3"/>
</dbReference>
<dbReference type="SMR" id="Q9R0X5"/>
<dbReference type="BioGRID" id="202963">
    <property type="interactions" value="2"/>
</dbReference>
<dbReference type="DIP" id="DIP-46319N"/>
<dbReference type="FunCoup" id="Q9R0X5">
    <property type="interactions" value="316"/>
</dbReference>
<dbReference type="IntAct" id="Q9R0X5">
    <property type="interactions" value="5"/>
</dbReference>
<dbReference type="STRING" id="10090.ENSMUSP00000037358"/>
<dbReference type="GlyGen" id="Q9R0X5">
    <property type="glycosylation" value="1 site, 1 O-linked glycan (1 site)"/>
</dbReference>
<dbReference type="iPTMnet" id="Q9R0X5"/>
<dbReference type="PhosphoSitePlus" id="Q9R0X5"/>
<dbReference type="PaxDb" id="10090-ENSMUSP00000037358"/>
<dbReference type="ProteomicsDB" id="300437">
    <molecule id="Q9R0X5-1"/>
</dbReference>
<dbReference type="ProteomicsDB" id="300438">
    <molecule id="Q9R0X5-2"/>
</dbReference>
<dbReference type="ProteomicsDB" id="300439">
    <molecule id="Q9R0X5-3"/>
</dbReference>
<dbReference type="ProteomicsDB" id="300440">
    <molecule id="Q9R0X5-4"/>
</dbReference>
<dbReference type="ProteomicsDB" id="300441">
    <molecule id="Q9R0X5-5"/>
</dbReference>
<dbReference type="DNASU" id="19893"/>
<dbReference type="Ensembl" id="ENSMUST00000044598.14">
    <molecule id="Q9R0X5-1"/>
    <property type="protein sequence ID" value="ENSMUSP00000037358.8"/>
    <property type="gene ID" value="ENSMUSG00000031174.19"/>
</dbReference>
<dbReference type="Ensembl" id="ENSMUST00000073392.12">
    <molecule id="Q9R0X5-2"/>
    <property type="protein sequence ID" value="ENSMUSP00000073106.6"/>
    <property type="gene ID" value="ENSMUSG00000031174.19"/>
</dbReference>
<dbReference type="Ensembl" id="ENSMUST00000250010.1">
    <molecule id="Q9R0X5-3"/>
    <property type="protein sequence ID" value="ENSMUSP00000160096.1"/>
    <property type="gene ID" value="ENSMUSG00000031174.19"/>
</dbReference>
<dbReference type="Ensembl" id="ENSMUST00000250011.1">
    <molecule id="Q9R0X5-4"/>
    <property type="protein sequence ID" value="ENSMUSP00000160097.1"/>
    <property type="gene ID" value="ENSMUSG00000031174.19"/>
</dbReference>
<dbReference type="GeneID" id="19893"/>
<dbReference type="KEGG" id="mmu:19893"/>
<dbReference type="UCSC" id="uc009sqj.2">
    <molecule id="Q9R0X5-4"/>
    <property type="organism name" value="mouse"/>
</dbReference>
<dbReference type="AGR" id="MGI:1344037"/>
<dbReference type="CTD" id="6103"/>
<dbReference type="MGI" id="MGI:1344037">
    <property type="gene designation" value="Rpgr"/>
</dbReference>
<dbReference type="eggNOG" id="KOG1426">
    <property type="taxonomic scope" value="Eukaryota"/>
</dbReference>
<dbReference type="GeneTree" id="ENSGT00940000159616"/>
<dbReference type="InParanoid" id="Q9R0X5"/>
<dbReference type="OrthoDB" id="10253607at2759"/>
<dbReference type="TreeFam" id="TF331400"/>
<dbReference type="BioGRID-ORCS" id="19893">
    <property type="hits" value="4 hits in 76 CRISPR screens"/>
</dbReference>
<dbReference type="ChiTaRS" id="Rpgr">
    <property type="organism name" value="mouse"/>
</dbReference>
<dbReference type="PRO" id="PR:Q9R0X5"/>
<dbReference type="Proteomes" id="UP000000589">
    <property type="component" value="Unplaced"/>
</dbReference>
<dbReference type="RNAct" id="Q9R0X5">
    <property type="molecule type" value="protein"/>
</dbReference>
<dbReference type="GO" id="GO:0005813">
    <property type="term" value="C:centrosome"/>
    <property type="evidence" value="ECO:0000250"/>
    <property type="project" value="UniProtKB"/>
</dbReference>
<dbReference type="GO" id="GO:0036064">
    <property type="term" value="C:ciliary basal body"/>
    <property type="evidence" value="ECO:0000314"/>
    <property type="project" value="UniProtKB"/>
</dbReference>
<dbReference type="GO" id="GO:0005929">
    <property type="term" value="C:cilium"/>
    <property type="evidence" value="ECO:0000314"/>
    <property type="project" value="MGI"/>
</dbReference>
<dbReference type="GO" id="GO:0005737">
    <property type="term" value="C:cytoplasm"/>
    <property type="evidence" value="ECO:0000314"/>
    <property type="project" value="MGI"/>
</dbReference>
<dbReference type="GO" id="GO:0005794">
    <property type="term" value="C:Golgi apparatus"/>
    <property type="evidence" value="ECO:0000314"/>
    <property type="project" value="UniProtKB"/>
</dbReference>
<dbReference type="GO" id="GO:0032391">
    <property type="term" value="C:photoreceptor connecting cilium"/>
    <property type="evidence" value="ECO:0000314"/>
    <property type="project" value="UniProtKB"/>
</dbReference>
<dbReference type="GO" id="GO:0120206">
    <property type="term" value="C:photoreceptor distal connecting cilium"/>
    <property type="evidence" value="ECO:0000314"/>
    <property type="project" value="MGI"/>
</dbReference>
<dbReference type="GO" id="GO:0036126">
    <property type="term" value="C:sperm flagellum"/>
    <property type="evidence" value="ECO:0000314"/>
    <property type="project" value="UniProtKB"/>
</dbReference>
<dbReference type="GO" id="GO:0005085">
    <property type="term" value="F:guanyl-nucleotide exchange factor activity"/>
    <property type="evidence" value="ECO:0000315"/>
    <property type="project" value="UniProtKB"/>
</dbReference>
<dbReference type="GO" id="GO:0071482">
    <property type="term" value="P:cellular response to light stimulus"/>
    <property type="evidence" value="ECO:0000315"/>
    <property type="project" value="MGI"/>
</dbReference>
<dbReference type="GO" id="GO:0042462">
    <property type="term" value="P:eye photoreceptor cell development"/>
    <property type="evidence" value="ECO:0000315"/>
    <property type="project" value="UniProtKB"/>
</dbReference>
<dbReference type="GO" id="GO:0042073">
    <property type="term" value="P:intraciliary transport"/>
    <property type="evidence" value="ECO:0000315"/>
    <property type="project" value="UniProtKB"/>
</dbReference>
<dbReference type="GO" id="GO:0010508">
    <property type="term" value="P:positive regulation of autophagy"/>
    <property type="evidence" value="ECO:0000315"/>
    <property type="project" value="UniProtKB"/>
</dbReference>
<dbReference type="GO" id="GO:0097499">
    <property type="term" value="P:protein localization to non-motile cilium"/>
    <property type="evidence" value="ECO:0000250"/>
    <property type="project" value="UniProtKB"/>
</dbReference>
<dbReference type="GO" id="GO:0060042">
    <property type="term" value="P:retina morphogenesis in camera-type eye"/>
    <property type="evidence" value="ECO:0000315"/>
    <property type="project" value="MGI"/>
</dbReference>
<dbReference type="GO" id="GO:0007601">
    <property type="term" value="P:visual perception"/>
    <property type="evidence" value="ECO:0000315"/>
    <property type="project" value="MGI"/>
</dbReference>
<dbReference type="FunFam" id="2.130.10.30:FF:000013">
    <property type="entry name" value="Retinitis pigmentosa GTPase regulator isoform 1"/>
    <property type="match status" value="1"/>
</dbReference>
<dbReference type="Gene3D" id="2.130.10.30">
    <property type="entry name" value="Regulator of chromosome condensation 1/beta-lactamase-inhibitor protein II"/>
    <property type="match status" value="1"/>
</dbReference>
<dbReference type="InterPro" id="IPR009091">
    <property type="entry name" value="RCC1/BLIP-II"/>
</dbReference>
<dbReference type="InterPro" id="IPR000408">
    <property type="entry name" value="Reg_chr_condens"/>
</dbReference>
<dbReference type="InterPro" id="IPR051625">
    <property type="entry name" value="Signaling_Regulatory_Domain"/>
</dbReference>
<dbReference type="PANTHER" id="PTHR22872">
    <property type="entry name" value="BTK-BINDING PROTEIN-RELATED"/>
    <property type="match status" value="1"/>
</dbReference>
<dbReference type="PANTHER" id="PTHR22872:SF9">
    <property type="entry name" value="X-LINKED RETINITIS PIGMENTOSA GTPASE REGULATOR"/>
    <property type="match status" value="1"/>
</dbReference>
<dbReference type="Pfam" id="PF25390">
    <property type="entry name" value="WD40_RLD"/>
    <property type="match status" value="1"/>
</dbReference>
<dbReference type="PRINTS" id="PR00633">
    <property type="entry name" value="RCCNDNSATION"/>
</dbReference>
<dbReference type="SUPFAM" id="SSF50985">
    <property type="entry name" value="RCC1/BLIP-II"/>
    <property type="match status" value="1"/>
</dbReference>
<dbReference type="PROSITE" id="PS00626">
    <property type="entry name" value="RCC1_2"/>
    <property type="match status" value="3"/>
</dbReference>
<dbReference type="PROSITE" id="PS50012">
    <property type="entry name" value="RCC1_3"/>
    <property type="match status" value="6"/>
</dbReference>
<feature type="chain" id="PRO_0000206639" description="X-linked retinitis pigmentosa GTPase regulator">
    <location>
        <begin position="1"/>
        <end position="998"/>
    </location>
</feature>
<feature type="propeptide" id="PRO_0000370845" description="Removed in mature form" evidence="3">
    <location>
        <begin position="999"/>
        <end position="1001"/>
    </location>
</feature>
<feature type="repeat" description="RCC1 1">
    <location>
        <begin position="54"/>
        <end position="105"/>
    </location>
</feature>
<feature type="repeat" description="RCC1 2">
    <location>
        <begin position="106"/>
        <end position="158"/>
    </location>
</feature>
<feature type="repeat" description="RCC1 3">
    <location>
        <begin position="159"/>
        <end position="208"/>
    </location>
</feature>
<feature type="repeat" description="RCC1 4">
    <location>
        <begin position="209"/>
        <end position="261"/>
    </location>
</feature>
<feature type="repeat" description="RCC1 5">
    <location>
        <begin position="262"/>
        <end position="313"/>
    </location>
</feature>
<feature type="repeat" description="RCC1 6">
    <location>
        <begin position="314"/>
        <end position="367"/>
    </location>
</feature>
<feature type="region of interest" description="Disordered" evidence="4">
    <location>
        <begin position="404"/>
        <end position="428"/>
    </location>
</feature>
<feature type="region of interest" description="Disordered" evidence="4">
    <location>
        <begin position="631"/>
        <end position="738"/>
    </location>
</feature>
<feature type="region of interest" description="Disordered" evidence="4">
    <location>
        <begin position="794"/>
        <end position="869"/>
    </location>
</feature>
<feature type="region of interest" description="Disordered" evidence="4">
    <location>
        <begin position="902"/>
        <end position="925"/>
    </location>
</feature>
<feature type="region of interest" description="Disordered" evidence="4">
    <location>
        <begin position="962"/>
        <end position="1001"/>
    </location>
</feature>
<feature type="compositionally biased region" description="Basic and acidic residues" evidence="4">
    <location>
        <begin position="631"/>
        <end position="641"/>
    </location>
</feature>
<feature type="compositionally biased region" description="Basic and acidic residues" evidence="4">
    <location>
        <begin position="659"/>
        <end position="671"/>
    </location>
</feature>
<feature type="compositionally biased region" description="Acidic residues" evidence="4">
    <location>
        <begin position="679"/>
        <end position="691"/>
    </location>
</feature>
<feature type="compositionally biased region" description="Acidic residues" evidence="4">
    <location>
        <begin position="717"/>
        <end position="731"/>
    </location>
</feature>
<feature type="compositionally biased region" description="Basic and acidic residues" evidence="4">
    <location>
        <begin position="794"/>
        <end position="818"/>
    </location>
</feature>
<feature type="compositionally biased region" description="Basic and acidic residues" evidence="4">
    <location>
        <begin position="847"/>
        <end position="857"/>
    </location>
</feature>
<feature type="compositionally biased region" description="Basic and acidic residues" evidence="4">
    <location>
        <begin position="902"/>
        <end position="911"/>
    </location>
</feature>
<feature type="compositionally biased region" description="Polar residues" evidence="4">
    <location>
        <begin position="976"/>
        <end position="1001"/>
    </location>
</feature>
<feature type="modified residue" description="Phosphoserine" evidence="1">
    <location>
        <position position="518"/>
    </location>
</feature>
<feature type="modified residue" description="Cysteine methyl ester" evidence="21">
    <location>
        <position position="998"/>
    </location>
</feature>
<feature type="lipid moiety-binding region" description="S-geranylgeranyl cysteine" evidence="20">
    <location>
        <position position="998"/>
    </location>
</feature>
<feature type="splice variant" id="VSP_005551" description="In isoform 4." evidence="20">
    <location>
        <begin position="260"/>
        <end position="469"/>
    </location>
</feature>
<feature type="splice variant" id="VSP_005552" description="In isoform 2, isoform 3 and isoform 4." evidence="20">
    <location>
        <begin position="525"/>
        <end position="817"/>
    </location>
</feature>
<feature type="splice variant" id="VSP_045292" description="In isoform 5." evidence="21">
    <original>APQLSETVKPEEGEMDEEISILNVEDTVEEERKEGEKEIVEEGSIPETEGSETIDITDEKLDEVLKEEDSASLLQRALREYNENPKGHMYDRVKSSSSEILGGNDPTSKDIKKAKKISFFNRMSLTGQKLMQNTNDPLPEIKPIGDQIALQSDKKDANQNHMGQNLQDSTTPNMEGKSKSCTIL</original>
    <variation>VSESERESGGEREDRSEGDGDQICEKVSLETEHLQRAQGKQERKKGKDKRARCILDMKEREEDKGWEKGSEGGDKMKRDEGNQEKRKKEMEERDAGDERSEEEEGEEEEPEEGEKEEGGEEEEGTSEDQSREDEGDRQEKEGRREGKGRQEDGREGWKEGEEQEQEEEIEEGEEEEREGEEEGGEEEGEGEGEREEEGEGEEEGEGEEEGEGEEEGEGEEEGEGEEEGEGEEEGEGEEEGEGEEDGEGEEDGEGEEEGEGEEEGEREEDGEGEEDGEGEEEGEGEEEGEGEEEGEGEEEGEGEGEEEGEGEWEGEEEGEGEEEGEGEEEGEGEEEGEGEEEGEGEEEGGEDDEGEELEKKKGDITEEEEEEEEGQEGDEREREEHGSCEDDVEEDKTYDREEGEYKKAIGKVADNESQEDRKQSPKVSKINGSMKYGRHGTYSEKPITNLGKTQPSKMPMESRQLVENGLLGSERFWSDVLPLYLELK</variation>
    <location>
        <begin position="818"/>
        <end position="1001"/>
    </location>
</feature>
<feature type="splice variant" id="VSP_005553" description="In isoform 3." evidence="20">
    <location>
        <begin position="904"/>
        <end position="943"/>
    </location>
</feature>
<feature type="splice variant" id="VSP_005554" description="In isoform 4." evidence="20">
    <original>GHMY</original>
    <variation>DFLL</variation>
    <location>
        <begin position="904"/>
        <end position="907"/>
    </location>
</feature>
<feature type="splice variant" id="VSP_005555" description="In isoform 4." evidence="20">
    <location>
        <begin position="908"/>
        <end position="1001"/>
    </location>
</feature>
<feature type="sequence conflict" description="In Ref. 3; CAC86115." evidence="21" ref="3">
    <original>N</original>
    <variation>S</variation>
    <location>
        <position position="226"/>
    </location>
</feature>
<feature type="sequence conflict" description="In Ref. 2; CAB54041 and 6; AEO00588." evidence="21" ref="2 6">
    <original>K</original>
    <variation>R</variation>
    <location>
        <position position="606"/>
    </location>
</feature>
<feature type="sequence conflict" description="In Ref. 2; CAB54041 and 6; AEO00588." evidence="21" ref="2 6">
    <original>S</original>
    <variation>N</variation>
    <location>
        <position position="697"/>
    </location>
</feature>
<gene>
    <name evidence="26" type="primary">Rpgr</name>
</gene>
<sequence>MAESESLVPDTGAVFTFGKTKFAENIPSKFWFKNDIPICLSCGDEHTAIVTGNNKLYMFGSNNWGQLGLGSKAAIIKPTCIKALKPEKVKLAACGRNHTLVSTDTGGVYAAGGNNEGQLGLGDTDDRDTFHQIVFFTPADTIKQLSAGANTSAALTEDGKLFMWGDNSEGQIGLEDKSNVCIPHEVTVGKPISWISCGYYHSAFVTMDGELYTFGEPENGKLGLPNELLMNHRSPQRVLGIPERVIQVACGGGHTVVLTEKVVYAFGLGQFGQLGLGTFLFETSEPKIIERIKDQKICHISCGENHTALMTELGLLYTFGDGRHGKLGLGMENFTNQFFPTLCSNFLRFAVQLIACGGCHMLVFATPRLGTIDEPKFEDVYEPYISTGSFSINDLSPRSSLNRSLSARLRRRERERPPCSASMVGTLPPLEGTSASTSAYFYPSSPPFHLSVNNYPEKSPSESMEPLDSDYFEDKMNKDTETENSSAVDSENFGETNDILNMTHMMTTSSNEKLLDFSPIQKQQNQDTFEKVMESTPCTENEDSYEYEEMSKIKEVTVYKQYLAKGIYMIRPAEILEAFSDEEVGNGLDQVEEPRVFTDGKGLQSKQVGKESDEEIVSEKKTEVMEVADVKKIRESEENSKSDSLFDDLPDKTMNSESEDNKDIAEERRSSEQNMTFDSETELVEEPDSYMECERHSEQDSAEELEQPKLVEYSSEEKDEKDEKDDDEVETENLWYDRNCTEQETENVFRATRFFPKFDLKHDHLSGIPEEQEGPEDSEGNVVVEQVVQAQKENLEFEGDRKEAKAEAPSDVITEKEAPQLSETVKPEEGEMDEEISILNVEDTVEEERKEGEKEIVEEGSIPETEGSETIDITDEKLDEVLKEEDSASLLQRALREYNENPKGHMYDRVKSSSSEILGGNDPTSKDIKKAKKISFFNRMSLTGQKLMQNTNDPLPEIKPIGDQIALQSDKKDANQNHMGQNLQDSTTPNMEGKSKSCTIL</sequence>